<organism>
    <name type="scientific">Lactobacillus delbrueckii subsp. bulgaricus (strain ATCC BAA-365 / Lb-18)</name>
    <dbReference type="NCBI Taxonomy" id="321956"/>
    <lineage>
        <taxon>Bacteria</taxon>
        <taxon>Bacillati</taxon>
        <taxon>Bacillota</taxon>
        <taxon>Bacilli</taxon>
        <taxon>Lactobacillales</taxon>
        <taxon>Lactobacillaceae</taxon>
        <taxon>Lactobacillus</taxon>
    </lineage>
</organism>
<sequence>MSTKRTYQPKKRHRSRVHGFMKRMATSNGRKVLARRRAKGRKVLSA</sequence>
<dbReference type="EMBL" id="CP000412">
    <property type="protein sequence ID" value="ABJ59416.1"/>
    <property type="molecule type" value="Genomic_DNA"/>
</dbReference>
<dbReference type="RefSeq" id="WP_008459582.1">
    <property type="nucleotide sequence ID" value="NC_008529.1"/>
</dbReference>
<dbReference type="SMR" id="Q047F6"/>
<dbReference type="KEGG" id="lbu:LBUL_2039"/>
<dbReference type="HOGENOM" id="CLU_129938_2_0_9"/>
<dbReference type="BioCyc" id="LDEL321956:LBUL_RS10370-MONOMER"/>
<dbReference type="GO" id="GO:1990904">
    <property type="term" value="C:ribonucleoprotein complex"/>
    <property type="evidence" value="ECO:0007669"/>
    <property type="project" value="UniProtKB-KW"/>
</dbReference>
<dbReference type="GO" id="GO:0005840">
    <property type="term" value="C:ribosome"/>
    <property type="evidence" value="ECO:0007669"/>
    <property type="project" value="UniProtKB-KW"/>
</dbReference>
<dbReference type="GO" id="GO:0003735">
    <property type="term" value="F:structural constituent of ribosome"/>
    <property type="evidence" value="ECO:0007669"/>
    <property type="project" value="InterPro"/>
</dbReference>
<dbReference type="GO" id="GO:0006412">
    <property type="term" value="P:translation"/>
    <property type="evidence" value="ECO:0007669"/>
    <property type="project" value="UniProtKB-UniRule"/>
</dbReference>
<dbReference type="FunFam" id="1.10.287.3980:FF:000001">
    <property type="entry name" value="Mitochondrial ribosomal protein L34"/>
    <property type="match status" value="1"/>
</dbReference>
<dbReference type="Gene3D" id="1.10.287.3980">
    <property type="match status" value="1"/>
</dbReference>
<dbReference type="HAMAP" id="MF_00391">
    <property type="entry name" value="Ribosomal_bL34"/>
    <property type="match status" value="1"/>
</dbReference>
<dbReference type="InterPro" id="IPR000271">
    <property type="entry name" value="Ribosomal_bL34"/>
</dbReference>
<dbReference type="InterPro" id="IPR020939">
    <property type="entry name" value="Ribosomal_bL34_CS"/>
</dbReference>
<dbReference type="NCBIfam" id="TIGR01030">
    <property type="entry name" value="rpmH_bact"/>
    <property type="match status" value="1"/>
</dbReference>
<dbReference type="PANTHER" id="PTHR14503:SF4">
    <property type="entry name" value="LARGE RIBOSOMAL SUBUNIT PROTEIN BL34M"/>
    <property type="match status" value="1"/>
</dbReference>
<dbReference type="PANTHER" id="PTHR14503">
    <property type="entry name" value="MITOCHONDRIAL RIBOSOMAL PROTEIN 34 FAMILY MEMBER"/>
    <property type="match status" value="1"/>
</dbReference>
<dbReference type="Pfam" id="PF00468">
    <property type="entry name" value="Ribosomal_L34"/>
    <property type="match status" value="1"/>
</dbReference>
<dbReference type="PROSITE" id="PS00784">
    <property type="entry name" value="RIBOSOMAL_L34"/>
    <property type="match status" value="1"/>
</dbReference>
<proteinExistence type="inferred from homology"/>
<accession>Q047F6</accession>
<keyword id="KW-0687">Ribonucleoprotein</keyword>
<keyword id="KW-0689">Ribosomal protein</keyword>
<comment type="similarity">
    <text evidence="1">Belongs to the bacterial ribosomal protein bL34 family.</text>
</comment>
<feature type="chain" id="PRO_1000013360" description="Large ribosomal subunit protein bL34">
    <location>
        <begin position="1"/>
        <end position="46"/>
    </location>
</feature>
<feature type="region of interest" description="Disordered" evidence="2">
    <location>
        <begin position="26"/>
        <end position="46"/>
    </location>
</feature>
<feature type="compositionally biased region" description="Basic residues" evidence="2">
    <location>
        <begin position="32"/>
        <end position="46"/>
    </location>
</feature>
<evidence type="ECO:0000255" key="1">
    <source>
        <dbReference type="HAMAP-Rule" id="MF_00391"/>
    </source>
</evidence>
<evidence type="ECO:0000256" key="2">
    <source>
        <dbReference type="SAM" id="MobiDB-lite"/>
    </source>
</evidence>
<evidence type="ECO:0000305" key="3"/>
<reference key="1">
    <citation type="journal article" date="2006" name="Proc. Natl. Acad. Sci. U.S.A.">
        <title>Comparative genomics of the lactic acid bacteria.</title>
        <authorList>
            <person name="Makarova K.S."/>
            <person name="Slesarev A."/>
            <person name="Wolf Y.I."/>
            <person name="Sorokin A."/>
            <person name="Mirkin B."/>
            <person name="Koonin E.V."/>
            <person name="Pavlov A."/>
            <person name="Pavlova N."/>
            <person name="Karamychev V."/>
            <person name="Polouchine N."/>
            <person name="Shakhova V."/>
            <person name="Grigoriev I."/>
            <person name="Lou Y."/>
            <person name="Rohksar D."/>
            <person name="Lucas S."/>
            <person name="Huang K."/>
            <person name="Goodstein D.M."/>
            <person name="Hawkins T."/>
            <person name="Plengvidhya V."/>
            <person name="Welker D."/>
            <person name="Hughes J."/>
            <person name="Goh Y."/>
            <person name="Benson A."/>
            <person name="Baldwin K."/>
            <person name="Lee J.-H."/>
            <person name="Diaz-Muniz I."/>
            <person name="Dosti B."/>
            <person name="Smeianov V."/>
            <person name="Wechter W."/>
            <person name="Barabote R."/>
            <person name="Lorca G."/>
            <person name="Altermann E."/>
            <person name="Barrangou R."/>
            <person name="Ganesan B."/>
            <person name="Xie Y."/>
            <person name="Rawsthorne H."/>
            <person name="Tamir D."/>
            <person name="Parker C."/>
            <person name="Breidt F."/>
            <person name="Broadbent J.R."/>
            <person name="Hutkins R."/>
            <person name="O'Sullivan D."/>
            <person name="Steele J."/>
            <person name="Unlu G."/>
            <person name="Saier M.H. Jr."/>
            <person name="Klaenhammer T."/>
            <person name="Richardson P."/>
            <person name="Kozyavkin S."/>
            <person name="Weimer B.C."/>
            <person name="Mills D.A."/>
        </authorList>
    </citation>
    <scope>NUCLEOTIDE SEQUENCE [LARGE SCALE GENOMIC DNA]</scope>
    <source>
        <strain>ATCC BAA-365 / Lb-18</strain>
    </source>
</reference>
<name>RL34_LACDB</name>
<protein>
    <recommendedName>
        <fullName evidence="1">Large ribosomal subunit protein bL34</fullName>
    </recommendedName>
    <alternativeName>
        <fullName evidence="3">50S ribosomal protein L34</fullName>
    </alternativeName>
</protein>
<gene>
    <name evidence="1" type="primary">rpmH</name>
    <name type="ordered locus">LBUL_2039</name>
</gene>